<organism>
    <name type="scientific">Streptococcus pyogenes serotype M2 (strain MGAS10270)</name>
    <dbReference type="NCBI Taxonomy" id="370552"/>
    <lineage>
        <taxon>Bacteria</taxon>
        <taxon>Bacillati</taxon>
        <taxon>Bacillota</taxon>
        <taxon>Bacilli</taxon>
        <taxon>Lactobacillales</taxon>
        <taxon>Streptococcaceae</taxon>
        <taxon>Streptococcus</taxon>
    </lineage>
</organism>
<sequence>MSKNLLIELGLEELPAYVVTPSEKQLGERLATFLTENRLSFEDIQTFSTPRRLAVRVSGLADQQTDLTEDFKGPAKKIALDADGNFSKAAQGFVRGKGLTTDAIEFREVKGEEYVYVTKHEAGKPAKEVLLGVTEVLSAMTFPVSMHWANNSFEYIRPVHTLTVLLNDEALELDFLDIHSGCVSRGHRFLGTETTITSADSYEADLRSQCVIVDAKERQEMIVEQIKTLEVEQGVQVDIDENLLNEVLNLVEFPTAFMGSFEAKYLDIPEEVLVTSMKNHQRYFVVRDQAGHLMPNFVSVRNGNDQAIENVIKGNEKVLVARLEDGEFFWREDQKLQIADLVAKLTNVTFHEKIGSLAEHMDRTRVIAASLAKEANLSAEEVTAVDRAAQIYKFDLLTGMVGEFDELQGIMGEKYALLAGEDAAVATAIREHYLPDAAGGALPETKVGAVLALADKLDTLLSFFSVGLIPSGSNDPYALRRATQGIVRILDHFGWRIPMDKLVDSLYDLSFDSLTYTNKADVMNFIRARVDKMMGKAAPKDIREAILASSTFVVPEMLAVAEALVKASHTENYKPAVESLSRAFNLAEKADASVQVDPSLFENEQENTLFAAIQGLTLAGSAAQQLEQVFALSPVINDFFDNTMVMAEDQALKNNRLAILSDLVSKAKTIAAFNQLNTK</sequence>
<gene>
    <name evidence="1" type="primary">glyS</name>
    <name type="ordered locus">MGAS10270_Spy1503</name>
</gene>
<comment type="catalytic activity">
    <reaction evidence="1">
        <text>tRNA(Gly) + glycine + ATP = glycyl-tRNA(Gly) + AMP + diphosphate</text>
        <dbReference type="Rhea" id="RHEA:16013"/>
        <dbReference type="Rhea" id="RHEA-COMP:9664"/>
        <dbReference type="Rhea" id="RHEA-COMP:9683"/>
        <dbReference type="ChEBI" id="CHEBI:30616"/>
        <dbReference type="ChEBI" id="CHEBI:33019"/>
        <dbReference type="ChEBI" id="CHEBI:57305"/>
        <dbReference type="ChEBI" id="CHEBI:78442"/>
        <dbReference type="ChEBI" id="CHEBI:78522"/>
        <dbReference type="ChEBI" id="CHEBI:456215"/>
        <dbReference type="EC" id="6.1.1.14"/>
    </reaction>
</comment>
<comment type="subunit">
    <text evidence="1">Tetramer of two alpha and two beta subunits.</text>
</comment>
<comment type="subcellular location">
    <subcellularLocation>
        <location evidence="1">Cytoplasm</location>
    </subcellularLocation>
</comment>
<comment type="similarity">
    <text evidence="1">Belongs to the class-II aminoacyl-tRNA synthetase family.</text>
</comment>
<keyword id="KW-0030">Aminoacyl-tRNA synthetase</keyword>
<keyword id="KW-0067">ATP-binding</keyword>
<keyword id="KW-0963">Cytoplasm</keyword>
<keyword id="KW-0436">Ligase</keyword>
<keyword id="KW-0547">Nucleotide-binding</keyword>
<keyword id="KW-0648">Protein biosynthesis</keyword>
<accession>Q1JFJ1</accession>
<proteinExistence type="inferred from homology"/>
<dbReference type="EC" id="6.1.1.14" evidence="1"/>
<dbReference type="EMBL" id="CP000260">
    <property type="protein sequence ID" value="ABF34568.1"/>
    <property type="molecule type" value="Genomic_DNA"/>
</dbReference>
<dbReference type="SMR" id="Q1JFJ1"/>
<dbReference type="KEGG" id="sph:MGAS10270_Spy1503"/>
<dbReference type="HOGENOM" id="CLU_007220_2_2_9"/>
<dbReference type="Proteomes" id="UP000002436">
    <property type="component" value="Chromosome"/>
</dbReference>
<dbReference type="GO" id="GO:0005829">
    <property type="term" value="C:cytosol"/>
    <property type="evidence" value="ECO:0007669"/>
    <property type="project" value="TreeGrafter"/>
</dbReference>
<dbReference type="GO" id="GO:0004814">
    <property type="term" value="F:arginine-tRNA ligase activity"/>
    <property type="evidence" value="ECO:0007669"/>
    <property type="project" value="InterPro"/>
</dbReference>
<dbReference type="GO" id="GO:0005524">
    <property type="term" value="F:ATP binding"/>
    <property type="evidence" value="ECO:0007669"/>
    <property type="project" value="UniProtKB-UniRule"/>
</dbReference>
<dbReference type="GO" id="GO:0004820">
    <property type="term" value="F:glycine-tRNA ligase activity"/>
    <property type="evidence" value="ECO:0007669"/>
    <property type="project" value="UniProtKB-UniRule"/>
</dbReference>
<dbReference type="GO" id="GO:0006420">
    <property type="term" value="P:arginyl-tRNA aminoacylation"/>
    <property type="evidence" value="ECO:0007669"/>
    <property type="project" value="InterPro"/>
</dbReference>
<dbReference type="GO" id="GO:0006426">
    <property type="term" value="P:glycyl-tRNA aminoacylation"/>
    <property type="evidence" value="ECO:0007669"/>
    <property type="project" value="UniProtKB-UniRule"/>
</dbReference>
<dbReference type="HAMAP" id="MF_00255">
    <property type="entry name" value="Gly_tRNA_synth_beta"/>
    <property type="match status" value="1"/>
</dbReference>
<dbReference type="InterPro" id="IPR008909">
    <property type="entry name" value="DALR_anticod-bd"/>
</dbReference>
<dbReference type="InterPro" id="IPR015944">
    <property type="entry name" value="Gly-tRNA-synth_bsu"/>
</dbReference>
<dbReference type="InterPro" id="IPR006194">
    <property type="entry name" value="Gly-tRNA-synth_heterodimer"/>
</dbReference>
<dbReference type="NCBIfam" id="TIGR00211">
    <property type="entry name" value="glyS"/>
    <property type="match status" value="1"/>
</dbReference>
<dbReference type="PANTHER" id="PTHR30075:SF2">
    <property type="entry name" value="GLYCINE--TRNA LIGASE, CHLOROPLASTIC_MITOCHONDRIAL 2"/>
    <property type="match status" value="1"/>
</dbReference>
<dbReference type="PANTHER" id="PTHR30075">
    <property type="entry name" value="GLYCYL-TRNA SYNTHETASE"/>
    <property type="match status" value="1"/>
</dbReference>
<dbReference type="Pfam" id="PF05746">
    <property type="entry name" value="DALR_1"/>
    <property type="match status" value="1"/>
</dbReference>
<dbReference type="Pfam" id="PF02092">
    <property type="entry name" value="tRNA_synt_2f"/>
    <property type="match status" value="1"/>
</dbReference>
<dbReference type="PRINTS" id="PR01045">
    <property type="entry name" value="TRNASYNTHGB"/>
</dbReference>
<dbReference type="SUPFAM" id="SSF109604">
    <property type="entry name" value="HD-domain/PDEase-like"/>
    <property type="match status" value="1"/>
</dbReference>
<dbReference type="PROSITE" id="PS50861">
    <property type="entry name" value="AA_TRNA_LIGASE_II_GLYAB"/>
    <property type="match status" value="1"/>
</dbReference>
<reference key="1">
    <citation type="journal article" date="2006" name="Proc. Natl. Acad. Sci. U.S.A.">
        <title>Molecular genetic anatomy of inter- and intraserotype variation in the human bacterial pathogen group A Streptococcus.</title>
        <authorList>
            <person name="Beres S.B."/>
            <person name="Richter E.W."/>
            <person name="Nagiec M.J."/>
            <person name="Sumby P."/>
            <person name="Porcella S.F."/>
            <person name="DeLeo F.R."/>
            <person name="Musser J.M."/>
        </authorList>
    </citation>
    <scope>NUCLEOTIDE SEQUENCE [LARGE SCALE GENOMIC DNA]</scope>
    <source>
        <strain>MGAS10270</strain>
    </source>
</reference>
<protein>
    <recommendedName>
        <fullName evidence="1">Glycine--tRNA ligase beta subunit</fullName>
        <ecNumber evidence="1">6.1.1.14</ecNumber>
    </recommendedName>
    <alternativeName>
        <fullName evidence="1">Glycyl-tRNA synthetase beta subunit</fullName>
        <shortName evidence="1">GlyRS</shortName>
    </alternativeName>
</protein>
<name>SYGB_STRPD</name>
<evidence type="ECO:0000255" key="1">
    <source>
        <dbReference type="HAMAP-Rule" id="MF_00255"/>
    </source>
</evidence>
<feature type="chain" id="PRO_1000101351" description="Glycine--tRNA ligase beta subunit">
    <location>
        <begin position="1"/>
        <end position="679"/>
    </location>
</feature>